<gene>
    <name evidence="1" type="primary">pnp</name>
    <name type="ordered locus">Tlet_1402</name>
</gene>
<keyword id="KW-0963">Cytoplasm</keyword>
<keyword id="KW-0460">Magnesium</keyword>
<keyword id="KW-0479">Metal-binding</keyword>
<keyword id="KW-0548">Nucleotidyltransferase</keyword>
<keyword id="KW-1185">Reference proteome</keyword>
<keyword id="KW-0694">RNA-binding</keyword>
<keyword id="KW-0808">Transferase</keyword>
<proteinExistence type="inferred from homology"/>
<accession>A8F725</accession>
<name>PNP_PSELT</name>
<evidence type="ECO:0000255" key="1">
    <source>
        <dbReference type="HAMAP-Rule" id="MF_01595"/>
    </source>
</evidence>
<evidence type="ECO:0000256" key="2">
    <source>
        <dbReference type="SAM" id="MobiDB-lite"/>
    </source>
</evidence>
<dbReference type="EC" id="2.7.7.8" evidence="1"/>
<dbReference type="EMBL" id="CP000812">
    <property type="protein sequence ID" value="ABV33959.1"/>
    <property type="molecule type" value="Genomic_DNA"/>
</dbReference>
<dbReference type="RefSeq" id="WP_012003435.1">
    <property type="nucleotide sequence ID" value="NZ_BSDV01000001.1"/>
</dbReference>
<dbReference type="SMR" id="A8F725"/>
<dbReference type="STRING" id="416591.Tlet_1402"/>
<dbReference type="KEGG" id="tle:Tlet_1402"/>
<dbReference type="eggNOG" id="COG1185">
    <property type="taxonomic scope" value="Bacteria"/>
</dbReference>
<dbReference type="HOGENOM" id="CLU_004217_2_2_0"/>
<dbReference type="OrthoDB" id="9804305at2"/>
<dbReference type="Proteomes" id="UP000002016">
    <property type="component" value="Chromosome"/>
</dbReference>
<dbReference type="GO" id="GO:0005829">
    <property type="term" value="C:cytosol"/>
    <property type="evidence" value="ECO:0007669"/>
    <property type="project" value="TreeGrafter"/>
</dbReference>
<dbReference type="GO" id="GO:0000175">
    <property type="term" value="F:3'-5'-RNA exonuclease activity"/>
    <property type="evidence" value="ECO:0007669"/>
    <property type="project" value="TreeGrafter"/>
</dbReference>
<dbReference type="GO" id="GO:0000287">
    <property type="term" value="F:magnesium ion binding"/>
    <property type="evidence" value="ECO:0007669"/>
    <property type="project" value="UniProtKB-UniRule"/>
</dbReference>
<dbReference type="GO" id="GO:0004654">
    <property type="term" value="F:polyribonucleotide nucleotidyltransferase activity"/>
    <property type="evidence" value="ECO:0007669"/>
    <property type="project" value="UniProtKB-UniRule"/>
</dbReference>
<dbReference type="GO" id="GO:0003723">
    <property type="term" value="F:RNA binding"/>
    <property type="evidence" value="ECO:0007669"/>
    <property type="project" value="UniProtKB-UniRule"/>
</dbReference>
<dbReference type="GO" id="GO:0006402">
    <property type="term" value="P:mRNA catabolic process"/>
    <property type="evidence" value="ECO:0007669"/>
    <property type="project" value="UniProtKB-UniRule"/>
</dbReference>
<dbReference type="GO" id="GO:0006396">
    <property type="term" value="P:RNA processing"/>
    <property type="evidence" value="ECO:0007669"/>
    <property type="project" value="InterPro"/>
</dbReference>
<dbReference type="CDD" id="cd02393">
    <property type="entry name" value="KH-I_PNPase"/>
    <property type="match status" value="1"/>
</dbReference>
<dbReference type="CDD" id="cd11363">
    <property type="entry name" value="RNase_PH_PNPase_1"/>
    <property type="match status" value="1"/>
</dbReference>
<dbReference type="CDD" id="cd11364">
    <property type="entry name" value="RNase_PH_PNPase_2"/>
    <property type="match status" value="1"/>
</dbReference>
<dbReference type="FunFam" id="3.30.1370.10:FF:000001">
    <property type="entry name" value="Polyribonucleotide nucleotidyltransferase"/>
    <property type="match status" value="1"/>
</dbReference>
<dbReference type="FunFam" id="3.30.230.70:FF:000001">
    <property type="entry name" value="Polyribonucleotide nucleotidyltransferase"/>
    <property type="match status" value="1"/>
</dbReference>
<dbReference type="FunFam" id="3.30.230.70:FF:000002">
    <property type="entry name" value="Polyribonucleotide nucleotidyltransferase"/>
    <property type="match status" value="1"/>
</dbReference>
<dbReference type="Gene3D" id="3.30.230.70">
    <property type="entry name" value="GHMP Kinase, N-terminal domain"/>
    <property type="match status" value="2"/>
</dbReference>
<dbReference type="Gene3D" id="3.30.1370.10">
    <property type="entry name" value="K Homology domain, type 1"/>
    <property type="match status" value="1"/>
</dbReference>
<dbReference type="Gene3D" id="2.40.50.140">
    <property type="entry name" value="Nucleic acid-binding proteins"/>
    <property type="match status" value="1"/>
</dbReference>
<dbReference type="HAMAP" id="MF_01595">
    <property type="entry name" value="PNPase"/>
    <property type="match status" value="1"/>
</dbReference>
<dbReference type="InterPro" id="IPR001247">
    <property type="entry name" value="ExoRNase_PH_dom1"/>
</dbReference>
<dbReference type="InterPro" id="IPR015847">
    <property type="entry name" value="ExoRNase_PH_dom2"/>
</dbReference>
<dbReference type="InterPro" id="IPR036345">
    <property type="entry name" value="ExoRNase_PH_dom2_sf"/>
</dbReference>
<dbReference type="InterPro" id="IPR004087">
    <property type="entry name" value="KH_dom"/>
</dbReference>
<dbReference type="InterPro" id="IPR004088">
    <property type="entry name" value="KH_dom_type_1"/>
</dbReference>
<dbReference type="InterPro" id="IPR036612">
    <property type="entry name" value="KH_dom_type_1_sf"/>
</dbReference>
<dbReference type="InterPro" id="IPR012340">
    <property type="entry name" value="NA-bd_OB-fold"/>
</dbReference>
<dbReference type="InterPro" id="IPR012162">
    <property type="entry name" value="PNPase"/>
</dbReference>
<dbReference type="InterPro" id="IPR027408">
    <property type="entry name" value="PNPase/RNase_PH_dom_sf"/>
</dbReference>
<dbReference type="InterPro" id="IPR036456">
    <property type="entry name" value="PNPase_PH_RNA-bd_sf"/>
</dbReference>
<dbReference type="InterPro" id="IPR020568">
    <property type="entry name" value="Ribosomal_Su5_D2-typ_SF"/>
</dbReference>
<dbReference type="InterPro" id="IPR003029">
    <property type="entry name" value="S1_domain"/>
</dbReference>
<dbReference type="NCBIfam" id="TIGR03591">
    <property type="entry name" value="polynuc_phos"/>
    <property type="match status" value="1"/>
</dbReference>
<dbReference type="NCBIfam" id="NF008805">
    <property type="entry name" value="PRK11824.1"/>
    <property type="match status" value="1"/>
</dbReference>
<dbReference type="PANTHER" id="PTHR11252">
    <property type="entry name" value="POLYRIBONUCLEOTIDE NUCLEOTIDYLTRANSFERASE"/>
    <property type="match status" value="1"/>
</dbReference>
<dbReference type="PANTHER" id="PTHR11252:SF0">
    <property type="entry name" value="POLYRIBONUCLEOTIDE NUCLEOTIDYLTRANSFERASE 1, MITOCHONDRIAL"/>
    <property type="match status" value="1"/>
</dbReference>
<dbReference type="Pfam" id="PF00013">
    <property type="entry name" value="KH_1"/>
    <property type="match status" value="1"/>
</dbReference>
<dbReference type="Pfam" id="PF01138">
    <property type="entry name" value="RNase_PH"/>
    <property type="match status" value="2"/>
</dbReference>
<dbReference type="Pfam" id="PF03725">
    <property type="entry name" value="RNase_PH_C"/>
    <property type="match status" value="2"/>
</dbReference>
<dbReference type="Pfam" id="PF00575">
    <property type="entry name" value="S1"/>
    <property type="match status" value="1"/>
</dbReference>
<dbReference type="PIRSF" id="PIRSF005499">
    <property type="entry name" value="PNPase"/>
    <property type="match status" value="1"/>
</dbReference>
<dbReference type="SMART" id="SM00322">
    <property type="entry name" value="KH"/>
    <property type="match status" value="1"/>
</dbReference>
<dbReference type="SMART" id="SM00316">
    <property type="entry name" value="S1"/>
    <property type="match status" value="1"/>
</dbReference>
<dbReference type="SUPFAM" id="SSF54791">
    <property type="entry name" value="Eukaryotic type KH-domain (KH-domain type I)"/>
    <property type="match status" value="1"/>
</dbReference>
<dbReference type="SUPFAM" id="SSF50249">
    <property type="entry name" value="Nucleic acid-binding proteins"/>
    <property type="match status" value="1"/>
</dbReference>
<dbReference type="SUPFAM" id="SSF46915">
    <property type="entry name" value="Polynucleotide phosphorylase/guanosine pentaphosphate synthase (PNPase/GPSI), domain 3"/>
    <property type="match status" value="1"/>
</dbReference>
<dbReference type="SUPFAM" id="SSF55666">
    <property type="entry name" value="Ribonuclease PH domain 2-like"/>
    <property type="match status" value="2"/>
</dbReference>
<dbReference type="SUPFAM" id="SSF54211">
    <property type="entry name" value="Ribosomal protein S5 domain 2-like"/>
    <property type="match status" value="2"/>
</dbReference>
<dbReference type="PROSITE" id="PS50084">
    <property type="entry name" value="KH_TYPE_1"/>
    <property type="match status" value="1"/>
</dbReference>
<dbReference type="PROSITE" id="PS50126">
    <property type="entry name" value="S1"/>
    <property type="match status" value="1"/>
</dbReference>
<sequence>MKTWKREILGREFIVEHGKVAKQANGAVVARIGDTTVLATAVMSDSAVEGIDFVPLTVEFQERFYAAGKIPGGFIKREGKPSEMAILSARTIDRPIRPLFPKHLRNEVQVVVTVISTDSVNTPDIVGVFAASLALNISDIPFNGIVAAVRVGLVDGKIVLFPTEDQLQKSLLDIVVAGTEDTITMVEGEAKEVSESQMLQALLKAHDAIKQIIDFEKEILSYFNIEKAQIAEKTLPEEIEKEFSQLLDGNELRERLLIQGKKARSNALSEYFKKIYEILEARYGTEKIEELSVLLKDKYEEALKYKMRRIIVEEGTRLDMRKPKDIRPITCETGLLPRVHGSALFTRGETQSLGIVTLGAPMDEQIIDSLLEEGTKRFMLHYNFPPFSTGEVKPLRGPSRREIGHGHLAERALKFVLPDEDRFPYTIRIVSEILESNGSSSMATVCSGSLALMDAGVPISKHVAGVAMGLILEKDSQIVLTDILGAEDHWGDMDFKVAGTRDGITAFQMDCKVSGVSADLLERALNQAKEARLYVLEKLYETISKPRDTLSKYAPVIKVISIDPSKVAEIIGPGGKIIKALIKDYDVKISVDDLTGKVSVIGGNEEKVDAAIEQINSILKEISVGDVFSGKVTRIEPFGVFVEISPGKVGLLHQSKLITDLKTVKIGETMRVKVSNIDNLGRLQLEEFSDSPDHKHGEKRSFKRHRKNDN</sequence>
<feature type="chain" id="PRO_0000329912" description="Polyribonucleotide nucleotidyltransferase">
    <location>
        <begin position="1"/>
        <end position="710"/>
    </location>
</feature>
<feature type="domain" description="KH" evidence="1">
    <location>
        <begin position="555"/>
        <end position="615"/>
    </location>
</feature>
<feature type="domain" description="S1 motif" evidence="1">
    <location>
        <begin position="625"/>
        <end position="688"/>
    </location>
</feature>
<feature type="region of interest" description="Disordered" evidence="2">
    <location>
        <begin position="688"/>
        <end position="710"/>
    </location>
</feature>
<feature type="compositionally biased region" description="Basic and acidic residues" evidence="2">
    <location>
        <begin position="691"/>
        <end position="700"/>
    </location>
</feature>
<feature type="compositionally biased region" description="Basic residues" evidence="2">
    <location>
        <begin position="701"/>
        <end position="710"/>
    </location>
</feature>
<feature type="binding site" evidence="1">
    <location>
        <position position="488"/>
    </location>
    <ligand>
        <name>Mg(2+)</name>
        <dbReference type="ChEBI" id="CHEBI:18420"/>
    </ligand>
</feature>
<feature type="binding site" evidence="1">
    <location>
        <position position="494"/>
    </location>
    <ligand>
        <name>Mg(2+)</name>
        <dbReference type="ChEBI" id="CHEBI:18420"/>
    </ligand>
</feature>
<protein>
    <recommendedName>
        <fullName evidence="1">Polyribonucleotide nucleotidyltransferase</fullName>
        <ecNumber evidence="1">2.7.7.8</ecNumber>
    </recommendedName>
    <alternativeName>
        <fullName evidence="1">Polynucleotide phosphorylase</fullName>
        <shortName evidence="1">PNPase</shortName>
    </alternativeName>
</protein>
<comment type="function">
    <text evidence="1">Involved in mRNA degradation. Catalyzes the phosphorolysis of single-stranded polyribonucleotides processively in the 3'- to 5'-direction.</text>
</comment>
<comment type="catalytic activity">
    <reaction evidence="1">
        <text>RNA(n+1) + phosphate = RNA(n) + a ribonucleoside 5'-diphosphate</text>
        <dbReference type="Rhea" id="RHEA:22096"/>
        <dbReference type="Rhea" id="RHEA-COMP:14527"/>
        <dbReference type="Rhea" id="RHEA-COMP:17342"/>
        <dbReference type="ChEBI" id="CHEBI:43474"/>
        <dbReference type="ChEBI" id="CHEBI:57930"/>
        <dbReference type="ChEBI" id="CHEBI:140395"/>
        <dbReference type="EC" id="2.7.7.8"/>
    </reaction>
</comment>
<comment type="cofactor">
    <cofactor evidence="1">
        <name>Mg(2+)</name>
        <dbReference type="ChEBI" id="CHEBI:18420"/>
    </cofactor>
</comment>
<comment type="subcellular location">
    <subcellularLocation>
        <location evidence="1">Cytoplasm</location>
    </subcellularLocation>
</comment>
<comment type="similarity">
    <text evidence="1">Belongs to the polyribonucleotide nucleotidyltransferase family.</text>
</comment>
<reference key="1">
    <citation type="submission" date="2007-08" db="EMBL/GenBank/DDBJ databases">
        <title>Complete sequence of Thermotoga lettingae TMO.</title>
        <authorList>
            <consortium name="US DOE Joint Genome Institute"/>
            <person name="Copeland A."/>
            <person name="Lucas S."/>
            <person name="Lapidus A."/>
            <person name="Barry K."/>
            <person name="Glavina del Rio T."/>
            <person name="Dalin E."/>
            <person name="Tice H."/>
            <person name="Pitluck S."/>
            <person name="Foster B."/>
            <person name="Bruce D."/>
            <person name="Schmutz J."/>
            <person name="Larimer F."/>
            <person name="Land M."/>
            <person name="Hauser L."/>
            <person name="Kyrpides N."/>
            <person name="Mikhailova N."/>
            <person name="Nelson K."/>
            <person name="Gogarten J.P."/>
            <person name="Noll K."/>
            <person name="Richardson P."/>
        </authorList>
    </citation>
    <scope>NUCLEOTIDE SEQUENCE [LARGE SCALE GENOMIC DNA]</scope>
    <source>
        <strain>ATCC BAA-301 / DSM 14385 / NBRC 107922 / TMO</strain>
    </source>
</reference>
<organism>
    <name type="scientific">Pseudothermotoga lettingae (strain ATCC BAA-301 / DSM 14385 / NBRC 107922 / TMO)</name>
    <name type="common">Thermotoga lettingae</name>
    <dbReference type="NCBI Taxonomy" id="416591"/>
    <lineage>
        <taxon>Bacteria</taxon>
        <taxon>Thermotogati</taxon>
        <taxon>Thermotogota</taxon>
        <taxon>Thermotogae</taxon>
        <taxon>Thermotogales</taxon>
        <taxon>Thermotogaceae</taxon>
        <taxon>Pseudothermotoga</taxon>
    </lineage>
</organism>